<comment type="sequence caution" evidence="5">
    <conflict type="erroneous initiation">
        <sequence resource="EMBL-CDS" id="CAI29683"/>
    </conflict>
</comment>
<keyword id="KW-0449">Lipoprotein</keyword>
<keyword id="KW-0479">Metal-binding</keyword>
<keyword id="KW-0488">Methylation</keyword>
<keyword id="KW-0519">Myristate</keyword>
<keyword id="KW-0597">Phosphoprotein</keyword>
<keyword id="KW-1185">Reference proteome</keyword>
<keyword id="KW-0862">Zinc</keyword>
<keyword id="KW-0863">Zinc-finger</keyword>
<feature type="initiator methionine" description="Removed" evidence="3">
    <location>
        <position position="1"/>
    </location>
</feature>
<feature type="chain" id="PRO_0000059333" description="PHD finger protein 24">
    <location>
        <begin position="2"/>
        <end position="400"/>
    </location>
</feature>
<feature type="zinc finger region" description="PHD-type">
    <location>
        <begin position="129"/>
        <end position="190"/>
    </location>
</feature>
<feature type="region of interest" description="Disordered" evidence="4">
    <location>
        <begin position="30"/>
        <end position="108"/>
    </location>
</feature>
<feature type="compositionally biased region" description="Basic and acidic residues" evidence="4">
    <location>
        <begin position="78"/>
        <end position="97"/>
    </location>
</feature>
<feature type="modified residue" description="Omega-N-methylarginine" evidence="2">
    <location>
        <position position="36"/>
    </location>
</feature>
<feature type="modified residue" description="Phosphoserine" evidence="3">
    <location>
        <position position="43"/>
    </location>
</feature>
<feature type="modified residue" description="Phosphothreonine" evidence="2">
    <location>
        <position position="47"/>
    </location>
</feature>
<feature type="modified residue" description="Phosphoserine" evidence="2">
    <location>
        <position position="51"/>
    </location>
</feature>
<feature type="lipid moiety-binding region" description="N-myristoyl glycine" evidence="1">
    <location>
        <position position="2"/>
    </location>
</feature>
<feature type="sequence conflict" description="In Ref. 1; CAI29683." evidence="5" ref="1">
    <original>K</original>
    <variation>E</variation>
    <location>
        <position position="25"/>
    </location>
</feature>
<feature type="sequence conflict" description="In Ref. 1; CAH93249." evidence="5" ref="1">
    <original>P</original>
    <variation>S</variation>
    <location>
        <position position="101"/>
    </location>
</feature>
<feature type="sequence conflict" description="In Ref. 1; CAH93249." evidence="5" ref="1">
    <original>D</original>
    <variation>N</variation>
    <location>
        <position position="130"/>
    </location>
</feature>
<protein>
    <recommendedName>
        <fullName evidence="3">PHD finger protein 24</fullName>
    </recommendedName>
</protein>
<evidence type="ECO:0000250" key="1"/>
<evidence type="ECO:0000250" key="2">
    <source>
        <dbReference type="UniProtKB" id="Q80TL4"/>
    </source>
</evidence>
<evidence type="ECO:0000250" key="3">
    <source>
        <dbReference type="UniProtKB" id="Q9UPV7"/>
    </source>
</evidence>
<evidence type="ECO:0000256" key="4">
    <source>
        <dbReference type="SAM" id="MobiDB-lite"/>
    </source>
</evidence>
<evidence type="ECO:0000305" key="5"/>
<accession>Q5R4R7</accession>
<accession>Q5NVI0</accession>
<proteinExistence type="evidence at transcript level"/>
<gene>
    <name evidence="3" type="primary">PHF24</name>
</gene>
<reference key="1">
    <citation type="submission" date="2004-11" db="EMBL/GenBank/DDBJ databases">
        <authorList>
            <consortium name="The German cDNA consortium"/>
        </authorList>
    </citation>
    <scope>NUCLEOTIDE SEQUENCE [LARGE SCALE MRNA]</scope>
    <source>
        <tissue>Brain cortex</tissue>
    </source>
</reference>
<sequence>MGVLMSKRQTVEQVQKVSLAVSAFKDGLRDRPSIRRTGELPGSRRGTVEGSVQEVQEEKEAEAGTSVVQEESSAGRAAWERLRDGRGVEPEEFDRTGRFTPPAFIRPTRKLDDDKPPEICLEPREPVVNDEMCDVCEVWTAESLFPCRVCTRVFHDGCLRRMGYIQGDSAAEVMEMAHTETGWSCHYCDNINLLLTEEEMYSLTETFQRCKVIPDCSLTLEDFLRYRHQAAKRGDRDRALSEEQEEQAARQFAALDPEHRGYIEWSDFLSHESLLLLQQLRPQNSLLRLLTVKERERARATFLARGSGSTISEAECRRAQHSWFCKRFPEAPSCSVSISHVGPIADSSPASSSSKSQDKTLLPTEQESRFVDWPTFLQENVLYILAARPNSAAIHLKPPG</sequence>
<name>PHF24_PONAB</name>
<dbReference type="EMBL" id="CR861177">
    <property type="protein sequence ID" value="CAH93249.1"/>
    <property type="molecule type" value="mRNA"/>
</dbReference>
<dbReference type="EMBL" id="CR926052">
    <property type="protein sequence ID" value="CAI29683.1"/>
    <property type="status" value="ALT_INIT"/>
    <property type="molecule type" value="mRNA"/>
</dbReference>
<dbReference type="RefSeq" id="NP_001127105.1">
    <property type="nucleotide sequence ID" value="NM_001133633.1"/>
</dbReference>
<dbReference type="RefSeq" id="NP_001128900.1">
    <property type="nucleotide sequence ID" value="NM_001135428.1"/>
</dbReference>
<dbReference type="BMRB" id="Q5R4R7"/>
<dbReference type="FunCoup" id="Q5R4R7">
    <property type="interactions" value="1301"/>
</dbReference>
<dbReference type="GeneID" id="100189840"/>
<dbReference type="KEGG" id="pon:100189840"/>
<dbReference type="CTD" id="23349"/>
<dbReference type="eggNOG" id="ENOG502QT6N">
    <property type="taxonomic scope" value="Eukaryota"/>
</dbReference>
<dbReference type="InParanoid" id="Q5R4R7"/>
<dbReference type="OrthoDB" id="9978298at2759"/>
<dbReference type="Proteomes" id="UP000001595">
    <property type="component" value="Unplaced"/>
</dbReference>
<dbReference type="GO" id="GO:0005737">
    <property type="term" value="C:cytoplasm"/>
    <property type="evidence" value="ECO:0007669"/>
    <property type="project" value="TreeGrafter"/>
</dbReference>
<dbReference type="GO" id="GO:0005634">
    <property type="term" value="C:nucleus"/>
    <property type="evidence" value="ECO:0007669"/>
    <property type="project" value="TreeGrafter"/>
</dbReference>
<dbReference type="GO" id="GO:0003714">
    <property type="term" value="F:transcription corepressor activity"/>
    <property type="evidence" value="ECO:0007669"/>
    <property type="project" value="TreeGrafter"/>
</dbReference>
<dbReference type="GO" id="GO:0008270">
    <property type="term" value="F:zinc ion binding"/>
    <property type="evidence" value="ECO:0007669"/>
    <property type="project" value="UniProtKB-KW"/>
</dbReference>
<dbReference type="FunFam" id="3.30.40.10:FF:000525">
    <property type="entry name" value="PHD finger protein 24"/>
    <property type="match status" value="1"/>
</dbReference>
<dbReference type="Gene3D" id="3.30.40.10">
    <property type="entry name" value="Zinc/RING finger domain, C3HC4 (zinc finger)"/>
    <property type="match status" value="1"/>
</dbReference>
<dbReference type="InterPro" id="IPR011992">
    <property type="entry name" value="EF-hand-dom_pair"/>
</dbReference>
<dbReference type="InterPro" id="IPR031946">
    <property type="entry name" value="KIAA1045_Zf_RING"/>
</dbReference>
<dbReference type="InterPro" id="IPR019786">
    <property type="entry name" value="Zinc_finger_PHD-type_CS"/>
</dbReference>
<dbReference type="InterPro" id="IPR011011">
    <property type="entry name" value="Znf_FYVE_PHD"/>
</dbReference>
<dbReference type="InterPro" id="IPR013083">
    <property type="entry name" value="Znf_RING/FYVE/PHD"/>
</dbReference>
<dbReference type="PANTHER" id="PTHR46453:SF4">
    <property type="entry name" value="PHD FINGER PROTEIN 24"/>
    <property type="match status" value="1"/>
</dbReference>
<dbReference type="PANTHER" id="PTHR46453">
    <property type="entry name" value="PROTEIN KINASE C-BINDING PROTEIN 1"/>
    <property type="match status" value="1"/>
</dbReference>
<dbReference type="Pfam" id="PF16744">
    <property type="entry name" value="zf-RING_15"/>
    <property type="match status" value="1"/>
</dbReference>
<dbReference type="SUPFAM" id="SSF47473">
    <property type="entry name" value="EF-hand"/>
    <property type="match status" value="1"/>
</dbReference>
<dbReference type="SUPFAM" id="SSF57903">
    <property type="entry name" value="FYVE/PHD zinc finger"/>
    <property type="match status" value="1"/>
</dbReference>
<dbReference type="PROSITE" id="PS01359">
    <property type="entry name" value="ZF_PHD_1"/>
    <property type="match status" value="1"/>
</dbReference>
<organism>
    <name type="scientific">Pongo abelii</name>
    <name type="common">Sumatran orangutan</name>
    <name type="synonym">Pongo pygmaeus abelii</name>
    <dbReference type="NCBI Taxonomy" id="9601"/>
    <lineage>
        <taxon>Eukaryota</taxon>
        <taxon>Metazoa</taxon>
        <taxon>Chordata</taxon>
        <taxon>Craniata</taxon>
        <taxon>Vertebrata</taxon>
        <taxon>Euteleostomi</taxon>
        <taxon>Mammalia</taxon>
        <taxon>Eutheria</taxon>
        <taxon>Euarchontoglires</taxon>
        <taxon>Primates</taxon>
        <taxon>Haplorrhini</taxon>
        <taxon>Catarrhini</taxon>
        <taxon>Hominidae</taxon>
        <taxon>Pongo</taxon>
    </lineage>
</organism>